<dbReference type="EMBL" id="CH933806">
    <property type="protein sequence ID" value="EDW16884.1"/>
    <property type="molecule type" value="Genomic_DNA"/>
</dbReference>
<dbReference type="SMR" id="B4KBF6"/>
<dbReference type="FunCoup" id="B4KBF6">
    <property type="interactions" value="341"/>
</dbReference>
<dbReference type="GeneID" id="6575413"/>
<dbReference type="KEGG" id="dmo:Dmoj_GI21984"/>
<dbReference type="CTD" id="41709"/>
<dbReference type="eggNOG" id="KOG2294">
    <property type="taxonomic scope" value="Eukaryota"/>
</dbReference>
<dbReference type="HOGENOM" id="CLU_024472_1_0_1"/>
<dbReference type="InParanoid" id="B4KBF6"/>
<dbReference type="OMA" id="WWMINRD"/>
<dbReference type="OrthoDB" id="5954824at2759"/>
<dbReference type="PhylomeDB" id="B4KBF6"/>
<dbReference type="ChiTaRS" id="foxo">
    <property type="organism name" value="fly"/>
</dbReference>
<dbReference type="Proteomes" id="UP000009192">
    <property type="component" value="Unassembled WGS sequence"/>
</dbReference>
<dbReference type="GO" id="GO:0005737">
    <property type="term" value="C:cytoplasm"/>
    <property type="evidence" value="ECO:0000250"/>
    <property type="project" value="UniProtKB"/>
</dbReference>
<dbReference type="GO" id="GO:0005634">
    <property type="term" value="C:nucleus"/>
    <property type="evidence" value="ECO:0000250"/>
    <property type="project" value="UniProtKB"/>
</dbReference>
<dbReference type="GO" id="GO:0003700">
    <property type="term" value="F:DNA-binding transcription factor activity"/>
    <property type="evidence" value="ECO:0000250"/>
    <property type="project" value="UniProtKB"/>
</dbReference>
<dbReference type="GO" id="GO:0000981">
    <property type="term" value="F:DNA-binding transcription factor activity, RNA polymerase II-specific"/>
    <property type="evidence" value="ECO:0007669"/>
    <property type="project" value="TreeGrafter"/>
</dbReference>
<dbReference type="GO" id="GO:0000978">
    <property type="term" value="F:RNA polymerase II cis-regulatory region sequence-specific DNA binding"/>
    <property type="evidence" value="ECO:0007669"/>
    <property type="project" value="TreeGrafter"/>
</dbReference>
<dbReference type="GO" id="GO:0030154">
    <property type="term" value="P:cell differentiation"/>
    <property type="evidence" value="ECO:0007669"/>
    <property type="project" value="UniProtKB-KW"/>
</dbReference>
<dbReference type="GO" id="GO:0042593">
    <property type="term" value="P:glucose homeostasis"/>
    <property type="evidence" value="ECO:0000250"/>
    <property type="project" value="UniProtKB"/>
</dbReference>
<dbReference type="GO" id="GO:0030308">
    <property type="term" value="P:negative regulation of cell growth"/>
    <property type="evidence" value="ECO:0000250"/>
    <property type="project" value="UniProtKB"/>
</dbReference>
<dbReference type="GO" id="GO:0008285">
    <property type="term" value="P:negative regulation of cell population proliferation"/>
    <property type="evidence" value="ECO:0000250"/>
    <property type="project" value="UniProtKB"/>
</dbReference>
<dbReference type="GO" id="GO:0046627">
    <property type="term" value="P:negative regulation of insulin receptor signaling pathway"/>
    <property type="evidence" value="ECO:0000250"/>
    <property type="project" value="UniProtKB"/>
</dbReference>
<dbReference type="GO" id="GO:0006355">
    <property type="term" value="P:regulation of DNA-templated transcription"/>
    <property type="evidence" value="ECO:0000250"/>
    <property type="project" value="UniProtKB"/>
</dbReference>
<dbReference type="GO" id="GO:0019216">
    <property type="term" value="P:regulation of lipid metabolic process"/>
    <property type="evidence" value="ECO:0000250"/>
    <property type="project" value="UniProtKB"/>
</dbReference>
<dbReference type="CDD" id="cd20032">
    <property type="entry name" value="FH_FOXO"/>
    <property type="match status" value="1"/>
</dbReference>
<dbReference type="FunFam" id="1.10.10.10:FF:000032">
    <property type="entry name" value="Forkhead box protein O4"/>
    <property type="match status" value="1"/>
</dbReference>
<dbReference type="Gene3D" id="1.10.10.10">
    <property type="entry name" value="Winged helix-like DNA-binding domain superfamily/Winged helix DNA-binding domain"/>
    <property type="match status" value="1"/>
</dbReference>
<dbReference type="InterPro" id="IPR001766">
    <property type="entry name" value="Fork_head_dom"/>
</dbReference>
<dbReference type="InterPro" id="IPR030456">
    <property type="entry name" value="TF_fork_head_CS_2"/>
</dbReference>
<dbReference type="InterPro" id="IPR036388">
    <property type="entry name" value="WH-like_DNA-bd_sf"/>
</dbReference>
<dbReference type="InterPro" id="IPR036390">
    <property type="entry name" value="WH_DNA-bd_sf"/>
</dbReference>
<dbReference type="PANTHER" id="PTHR45767">
    <property type="entry name" value="FORKHEAD BOX PROTEIN O"/>
    <property type="match status" value="1"/>
</dbReference>
<dbReference type="PANTHER" id="PTHR45767:SF2">
    <property type="entry name" value="FORKHEAD BOX PROTEIN O"/>
    <property type="match status" value="1"/>
</dbReference>
<dbReference type="Pfam" id="PF00250">
    <property type="entry name" value="Forkhead"/>
    <property type="match status" value="1"/>
</dbReference>
<dbReference type="PRINTS" id="PR00053">
    <property type="entry name" value="FORKHEAD"/>
</dbReference>
<dbReference type="SMART" id="SM00339">
    <property type="entry name" value="FH"/>
    <property type="match status" value="1"/>
</dbReference>
<dbReference type="SUPFAM" id="SSF46785">
    <property type="entry name" value="Winged helix' DNA-binding domain"/>
    <property type="match status" value="1"/>
</dbReference>
<dbReference type="PROSITE" id="PS00658">
    <property type="entry name" value="FORK_HEAD_2"/>
    <property type="match status" value="1"/>
</dbReference>
<dbReference type="PROSITE" id="PS50039">
    <property type="entry name" value="FORK_HEAD_3"/>
    <property type="match status" value="1"/>
</dbReference>
<gene>
    <name evidence="2" type="primary">foxo</name>
    <name type="ORF">GI21984</name>
</gene>
<sequence>MDDFAQEWPNLPRSDNGLQMDQLVGDLPTDGGFEPQTRARSNTWPCPRPEPVDELDSTKASNQQLANGDPQQAMQNANAAKKNSSRRNAWGNLSYADLITHAIGSATDKRLTLSQIYEWMVQNVSYFKDKGDSNSSAGWKNSIRHNLSLHNRFMRVQNEGTGKSSWWMLNPEAKPGKSVRRRAASMETSRYEKRRGRAKKRVEALRQAGVVGLNDATPSPSSSVSEGLDHFPESPLHSGSYQLSPDFRQRASSNASSCGRLSPIRALDLEPDWGFPVDYPNTTLTQAQVQVFDQLAGSMADELKLHTDMLQQQGFSAASGLPTQPPPPYQPPQHPQHTQGYALNGPGLSPNSVTTTMSPAYPNSEPSSDSLNTYSNVLLEAAADNAALLVQQQQQQQQQQQHASTLIGQCLEALNSEPIEEFNLENFQGGLECNVEELLHQELCYDGMLDINIPLAAVNTNATNVILTNNSTNSSSSNSNNSVAGNSSANLQLSQLQAQLQLQQQQQQQQQQQQQQQQQQQQLLLSNNNNNNNNSLDTASANLNARVQYTQPSVVTSPPSWVH</sequence>
<keyword id="KW-0010">Activator</keyword>
<keyword id="KW-0131">Cell cycle</keyword>
<keyword id="KW-0963">Cytoplasm</keyword>
<keyword id="KW-0217">Developmental protein</keyword>
<keyword id="KW-0221">Differentiation</keyword>
<keyword id="KW-0238">DNA-binding</keyword>
<keyword id="KW-0341">Growth regulation</keyword>
<keyword id="KW-0539">Nucleus</keyword>
<keyword id="KW-0597">Phosphoprotein</keyword>
<keyword id="KW-1185">Reference proteome</keyword>
<keyword id="KW-0804">Transcription</keyword>
<keyword id="KW-0805">Transcription regulation</keyword>
<evidence type="ECO:0000250" key="1"/>
<evidence type="ECO:0000250" key="2">
    <source>
        <dbReference type="UniProtKB" id="Q95V55"/>
    </source>
</evidence>
<evidence type="ECO:0000255" key="3">
    <source>
        <dbReference type="PROSITE-ProRule" id="PRU00089"/>
    </source>
</evidence>
<evidence type="ECO:0000256" key="4">
    <source>
        <dbReference type="SAM" id="MobiDB-lite"/>
    </source>
</evidence>
<evidence type="ECO:0000312" key="5">
    <source>
        <dbReference type="EMBL" id="EDW16884.1"/>
    </source>
</evidence>
<organism>
    <name type="scientific">Drosophila mojavensis</name>
    <name type="common">Fruit fly</name>
    <dbReference type="NCBI Taxonomy" id="7230"/>
    <lineage>
        <taxon>Eukaryota</taxon>
        <taxon>Metazoa</taxon>
        <taxon>Ecdysozoa</taxon>
        <taxon>Arthropoda</taxon>
        <taxon>Hexapoda</taxon>
        <taxon>Insecta</taxon>
        <taxon>Pterygota</taxon>
        <taxon>Neoptera</taxon>
        <taxon>Endopterygota</taxon>
        <taxon>Diptera</taxon>
        <taxon>Brachycera</taxon>
        <taxon>Muscomorpha</taxon>
        <taxon>Ephydroidea</taxon>
        <taxon>Drosophilidae</taxon>
        <taxon>Drosophila</taxon>
    </lineage>
</organism>
<comment type="function">
    <text evidence="1">Transcription factor involved in the regulation of the insulin signaling pathway. Consistently activates both the downstream target Thor\d4EBP and the feedback control target InR. Involved in negative regulation of the cell cycle, modulating cell growth and proliferation. In response to cellular stresses, such as nutrient deprivation or increased levels of reactive oxygen species, foxo is activated and inhibits growth through the action of target genes such as Thor. Foxo activated in the adult fat body can regulate lifespan in adults; an insulin peptide itself may function as one secondary messenger of insulin-regulated aging. Also regulates Lip4, homolog of human acid lipases, thereby acting as a key modulator of lipid metabolism by insulin signaling and integrates insulin responses to glucose and lipid homeostasis (By similarity).</text>
</comment>
<comment type="subunit">
    <text evidence="2">Interacts with melt.</text>
</comment>
<comment type="subcellular location">
    <subcellularLocation>
        <location evidence="2">Cytoplasm</location>
    </subcellularLocation>
    <subcellularLocation>
        <location evidence="2 3">Nucleus</location>
    </subcellularLocation>
    <text evidence="2">When phosphorylated, translocated from nucleus to cytoplasm. Dephosphorylation triggers nuclear translocation (By similarity).</text>
</comment>
<feature type="chain" id="PRO_0000396507" description="Forkhead box protein O">
    <location>
        <begin position="1"/>
        <end position="563"/>
    </location>
</feature>
<feature type="DNA-binding region" description="Fork-head" evidence="3">
    <location>
        <begin position="90"/>
        <end position="196"/>
    </location>
</feature>
<feature type="region of interest" description="Disordered" evidence="4">
    <location>
        <begin position="1"/>
        <end position="72"/>
    </location>
</feature>
<feature type="region of interest" description="Disordered" evidence="4">
    <location>
        <begin position="177"/>
        <end position="243"/>
    </location>
</feature>
<feature type="region of interest" description="Disordered" evidence="4">
    <location>
        <begin position="317"/>
        <end position="371"/>
    </location>
</feature>
<feature type="compositionally biased region" description="Polar residues" evidence="4">
    <location>
        <begin position="58"/>
        <end position="72"/>
    </location>
</feature>
<feature type="compositionally biased region" description="Polar residues" evidence="4">
    <location>
        <begin position="216"/>
        <end position="225"/>
    </location>
</feature>
<feature type="compositionally biased region" description="Pro residues" evidence="4">
    <location>
        <begin position="323"/>
        <end position="334"/>
    </location>
</feature>
<feature type="compositionally biased region" description="Polar residues" evidence="4">
    <location>
        <begin position="349"/>
        <end position="358"/>
    </location>
</feature>
<feature type="modified residue" description="Phosphothreonine; by PKB/AKT1" evidence="2">
    <location>
        <position position="43"/>
    </location>
</feature>
<feature type="modified residue" description="Phosphoserine; by PKB/AKT1" evidence="2">
    <location>
        <position position="185"/>
    </location>
</feature>
<feature type="modified residue" description="Phosphoserine; by PKB/AKT1" evidence="2">
    <location>
        <position position="253"/>
    </location>
</feature>
<feature type="modified residue" description="Phosphoserine" evidence="2">
    <location>
        <position position="256"/>
    </location>
</feature>
<feature type="modified residue" description="Phosphoserine" evidence="2">
    <location>
        <position position="257"/>
    </location>
</feature>
<feature type="modified residue" description="Phosphoserine" evidence="2">
    <location>
        <position position="262"/>
    </location>
</feature>
<protein>
    <recommendedName>
        <fullName evidence="2">Forkhead box protein O</fullName>
    </recommendedName>
</protein>
<accession>B4KBF6</accession>
<name>FOXO_DROMO</name>
<proteinExistence type="inferred from homology"/>
<reference evidence="5" key="1">
    <citation type="journal article" date="2007" name="Nature">
        <title>Evolution of genes and genomes on the Drosophila phylogeny.</title>
        <authorList>
            <consortium name="Drosophila 12 genomes consortium"/>
        </authorList>
    </citation>
    <scope>NUCLEOTIDE SEQUENCE [LARGE SCALE GENOMIC DNA]</scope>
    <source>
        <strain evidence="5">Tucson 15081-1352.22</strain>
    </source>
</reference>